<feature type="chain" id="PRO_0000217480" description="Uncharacterized protein ORF65">
    <location>
        <begin position="1"/>
        <end position="65"/>
    </location>
</feature>
<protein>
    <recommendedName>
        <fullName>Uncharacterized protein ORF65</fullName>
    </recommendedName>
</protein>
<geneLocation type="chloroplast"/>
<sequence length="65" mass="7637">MLIGQKVRIKYSKSKIANDIAVRVGDIGVIRGIKFINNQCVTIIVEFENHTRLWMFREELIYLNK</sequence>
<name>YCXG_PORPU</name>
<proteinExistence type="predicted"/>
<accession>P51282</accession>
<keyword id="KW-0150">Chloroplast</keyword>
<keyword id="KW-0934">Plastid</keyword>
<reference key="1">
    <citation type="journal article" date="1995" name="Plant Mol. Biol. Rep.">
        <title>Complete nucleotide sequence of the Porphyra purpurea chloroplast genome.</title>
        <authorList>
            <person name="Reith M.E."/>
            <person name="Munholland J."/>
        </authorList>
    </citation>
    <scope>NUCLEOTIDE SEQUENCE [LARGE SCALE GENOMIC DNA]</scope>
    <source>
        <strain>Avonport</strain>
    </source>
</reference>
<organism>
    <name type="scientific">Porphyra purpurea</name>
    <name type="common">Red seaweed</name>
    <name type="synonym">Ulva purpurea</name>
    <dbReference type="NCBI Taxonomy" id="2787"/>
    <lineage>
        <taxon>Eukaryota</taxon>
        <taxon>Rhodophyta</taxon>
        <taxon>Bangiophyceae</taxon>
        <taxon>Bangiales</taxon>
        <taxon>Bangiaceae</taxon>
        <taxon>Porphyra</taxon>
    </lineage>
</organism>
<dbReference type="EMBL" id="U38804">
    <property type="protein sequence ID" value="AAC08168.1"/>
    <property type="molecule type" value="Genomic_DNA"/>
</dbReference>
<dbReference type="PIR" id="S73203">
    <property type="entry name" value="S73203"/>
</dbReference>
<dbReference type="RefSeq" id="NP_053892.1">
    <property type="nucleotide sequence ID" value="NC_000925.1"/>
</dbReference>
<dbReference type="SMR" id="P51282"/>
<dbReference type="GeneID" id="1457262"/>
<dbReference type="GO" id="GO:0009507">
    <property type="term" value="C:chloroplast"/>
    <property type="evidence" value="ECO:0007669"/>
    <property type="project" value="UniProtKB-SubCell"/>
</dbReference>
<dbReference type="InterPro" id="IPR021291">
    <property type="entry name" value="Tsr0524-like"/>
</dbReference>
<dbReference type="Pfam" id="PF11061">
    <property type="entry name" value="Tsr0524-like"/>
    <property type="match status" value="1"/>
</dbReference>
<comment type="subcellular location">
    <subcellularLocation>
        <location>Plastid</location>
        <location>Chloroplast</location>
    </subcellularLocation>
</comment>